<evidence type="ECO:0000255" key="1">
    <source>
        <dbReference type="HAMAP-Rule" id="MF_02004"/>
    </source>
</evidence>
<feature type="chain" id="PRO_0000224540" description="Valine--tRNA ligase">
    <location>
        <begin position="1"/>
        <end position="948"/>
    </location>
</feature>
<feature type="coiled-coil region" evidence="1">
    <location>
        <begin position="879"/>
        <end position="945"/>
    </location>
</feature>
<feature type="short sequence motif" description="'HIGH' region">
    <location>
        <begin position="40"/>
        <end position="50"/>
    </location>
</feature>
<feature type="short sequence motif" description="'KMSKS' region">
    <location>
        <begin position="551"/>
        <end position="555"/>
    </location>
</feature>
<feature type="binding site" evidence="1">
    <location>
        <position position="554"/>
    </location>
    <ligand>
        <name>ATP</name>
        <dbReference type="ChEBI" id="CHEBI:30616"/>
    </ligand>
</feature>
<comment type="function">
    <text evidence="1">Catalyzes the attachment of valine to tRNA(Val). As ValRS can inadvertently accommodate and process structurally similar amino acids such as threonine, to avoid such errors, it has a 'posttransfer' editing activity that hydrolyzes mischarged Thr-tRNA(Val) in a tRNA-dependent manner.</text>
</comment>
<comment type="catalytic activity">
    <reaction evidence="1">
        <text>tRNA(Val) + L-valine + ATP = L-valyl-tRNA(Val) + AMP + diphosphate</text>
        <dbReference type="Rhea" id="RHEA:10704"/>
        <dbReference type="Rhea" id="RHEA-COMP:9672"/>
        <dbReference type="Rhea" id="RHEA-COMP:9708"/>
        <dbReference type="ChEBI" id="CHEBI:30616"/>
        <dbReference type="ChEBI" id="CHEBI:33019"/>
        <dbReference type="ChEBI" id="CHEBI:57762"/>
        <dbReference type="ChEBI" id="CHEBI:78442"/>
        <dbReference type="ChEBI" id="CHEBI:78537"/>
        <dbReference type="ChEBI" id="CHEBI:456215"/>
        <dbReference type="EC" id="6.1.1.9"/>
    </reaction>
</comment>
<comment type="subunit">
    <text evidence="1">Monomer.</text>
</comment>
<comment type="subcellular location">
    <subcellularLocation>
        <location evidence="1">Cytoplasm</location>
    </subcellularLocation>
</comment>
<comment type="domain">
    <text evidence="1">ValRS has two distinct active sites: one for aminoacylation and one for editing. The misactivated threonine is translocated from the active site to the editing site.</text>
</comment>
<comment type="domain">
    <text evidence="1">The C-terminal coiled-coil domain is crucial for aminoacylation activity.</text>
</comment>
<comment type="similarity">
    <text evidence="1">Belongs to the class-I aminoacyl-tRNA synthetase family. ValS type 1 subfamily.</text>
</comment>
<dbReference type="EC" id="6.1.1.9" evidence="1"/>
<dbReference type="EMBL" id="AE016853">
    <property type="protein sequence ID" value="AAO54793.1"/>
    <property type="molecule type" value="Genomic_DNA"/>
</dbReference>
<dbReference type="RefSeq" id="NP_791098.1">
    <property type="nucleotide sequence ID" value="NC_004578.1"/>
</dbReference>
<dbReference type="RefSeq" id="WP_011103493.1">
    <property type="nucleotide sequence ID" value="NC_004578.1"/>
</dbReference>
<dbReference type="SMR" id="Q887M3"/>
<dbReference type="STRING" id="223283.PSPTO_1268"/>
<dbReference type="GeneID" id="1182904"/>
<dbReference type="KEGG" id="pst:PSPTO_1268"/>
<dbReference type="PATRIC" id="fig|223283.9.peg.1290"/>
<dbReference type="eggNOG" id="COG0525">
    <property type="taxonomic scope" value="Bacteria"/>
</dbReference>
<dbReference type="HOGENOM" id="CLU_001493_0_2_6"/>
<dbReference type="OrthoDB" id="9810365at2"/>
<dbReference type="PhylomeDB" id="Q887M3"/>
<dbReference type="Proteomes" id="UP000002515">
    <property type="component" value="Chromosome"/>
</dbReference>
<dbReference type="GO" id="GO:0005829">
    <property type="term" value="C:cytosol"/>
    <property type="evidence" value="ECO:0007669"/>
    <property type="project" value="TreeGrafter"/>
</dbReference>
<dbReference type="GO" id="GO:0002161">
    <property type="term" value="F:aminoacyl-tRNA deacylase activity"/>
    <property type="evidence" value="ECO:0007669"/>
    <property type="project" value="InterPro"/>
</dbReference>
<dbReference type="GO" id="GO:0005524">
    <property type="term" value="F:ATP binding"/>
    <property type="evidence" value="ECO:0007669"/>
    <property type="project" value="UniProtKB-UniRule"/>
</dbReference>
<dbReference type="GO" id="GO:0004832">
    <property type="term" value="F:valine-tRNA ligase activity"/>
    <property type="evidence" value="ECO:0007669"/>
    <property type="project" value="UniProtKB-UniRule"/>
</dbReference>
<dbReference type="GO" id="GO:0006438">
    <property type="term" value="P:valyl-tRNA aminoacylation"/>
    <property type="evidence" value="ECO:0007669"/>
    <property type="project" value="UniProtKB-UniRule"/>
</dbReference>
<dbReference type="CDD" id="cd07962">
    <property type="entry name" value="Anticodon_Ia_Val"/>
    <property type="match status" value="1"/>
</dbReference>
<dbReference type="CDD" id="cd00817">
    <property type="entry name" value="ValRS_core"/>
    <property type="match status" value="1"/>
</dbReference>
<dbReference type="FunFam" id="1.10.287.380:FF:000001">
    <property type="entry name" value="Valine--tRNA ligase"/>
    <property type="match status" value="1"/>
</dbReference>
<dbReference type="FunFam" id="1.10.730.10:FF:000007">
    <property type="entry name" value="Valine--tRNA ligase"/>
    <property type="match status" value="1"/>
</dbReference>
<dbReference type="FunFam" id="3.40.50.620:FF:000146">
    <property type="entry name" value="Valine--tRNA ligase"/>
    <property type="match status" value="1"/>
</dbReference>
<dbReference type="FunFam" id="3.90.740.10:FF:000003">
    <property type="entry name" value="Valine--tRNA ligase"/>
    <property type="match status" value="1"/>
</dbReference>
<dbReference type="FunFam" id="3.40.50.620:FF:000020">
    <property type="entry name" value="Valine--tRNA ligase, mitochondrial"/>
    <property type="match status" value="1"/>
</dbReference>
<dbReference type="Gene3D" id="3.40.50.620">
    <property type="entry name" value="HUPs"/>
    <property type="match status" value="2"/>
</dbReference>
<dbReference type="Gene3D" id="1.10.730.10">
    <property type="entry name" value="Isoleucyl-tRNA Synthetase, Domain 1"/>
    <property type="match status" value="1"/>
</dbReference>
<dbReference type="Gene3D" id="1.10.287.380">
    <property type="entry name" value="Valyl-tRNA synthetase, C-terminal domain"/>
    <property type="match status" value="1"/>
</dbReference>
<dbReference type="Gene3D" id="3.90.740.10">
    <property type="entry name" value="Valyl/Leucyl/Isoleucyl-tRNA synthetase, editing domain"/>
    <property type="match status" value="1"/>
</dbReference>
<dbReference type="HAMAP" id="MF_02004">
    <property type="entry name" value="Val_tRNA_synth_type1"/>
    <property type="match status" value="1"/>
</dbReference>
<dbReference type="InterPro" id="IPR001412">
    <property type="entry name" value="aa-tRNA-synth_I_CS"/>
</dbReference>
<dbReference type="InterPro" id="IPR002300">
    <property type="entry name" value="aa-tRNA-synth_Ia"/>
</dbReference>
<dbReference type="InterPro" id="IPR033705">
    <property type="entry name" value="Anticodon_Ia_Val"/>
</dbReference>
<dbReference type="InterPro" id="IPR013155">
    <property type="entry name" value="M/V/L/I-tRNA-synth_anticd-bd"/>
</dbReference>
<dbReference type="InterPro" id="IPR014729">
    <property type="entry name" value="Rossmann-like_a/b/a_fold"/>
</dbReference>
<dbReference type="InterPro" id="IPR010978">
    <property type="entry name" value="tRNA-bd_arm"/>
</dbReference>
<dbReference type="InterPro" id="IPR009080">
    <property type="entry name" value="tRNAsynth_Ia_anticodon-bd"/>
</dbReference>
<dbReference type="InterPro" id="IPR037118">
    <property type="entry name" value="Val-tRNA_synth_C_sf"/>
</dbReference>
<dbReference type="InterPro" id="IPR019499">
    <property type="entry name" value="Val-tRNA_synth_tRNA-bd"/>
</dbReference>
<dbReference type="InterPro" id="IPR009008">
    <property type="entry name" value="Val/Leu/Ile-tRNA-synth_edit"/>
</dbReference>
<dbReference type="InterPro" id="IPR002303">
    <property type="entry name" value="Valyl-tRNA_ligase"/>
</dbReference>
<dbReference type="NCBIfam" id="NF004349">
    <property type="entry name" value="PRK05729.1"/>
    <property type="match status" value="1"/>
</dbReference>
<dbReference type="NCBIfam" id="TIGR00422">
    <property type="entry name" value="valS"/>
    <property type="match status" value="1"/>
</dbReference>
<dbReference type="PANTHER" id="PTHR11946:SF93">
    <property type="entry name" value="VALINE--TRNA LIGASE, CHLOROPLASTIC_MITOCHONDRIAL 2"/>
    <property type="match status" value="1"/>
</dbReference>
<dbReference type="PANTHER" id="PTHR11946">
    <property type="entry name" value="VALYL-TRNA SYNTHETASES"/>
    <property type="match status" value="1"/>
</dbReference>
<dbReference type="Pfam" id="PF08264">
    <property type="entry name" value="Anticodon_1"/>
    <property type="match status" value="1"/>
</dbReference>
<dbReference type="Pfam" id="PF00133">
    <property type="entry name" value="tRNA-synt_1"/>
    <property type="match status" value="1"/>
</dbReference>
<dbReference type="Pfam" id="PF10458">
    <property type="entry name" value="Val_tRNA-synt_C"/>
    <property type="match status" value="1"/>
</dbReference>
<dbReference type="PRINTS" id="PR00986">
    <property type="entry name" value="TRNASYNTHVAL"/>
</dbReference>
<dbReference type="SUPFAM" id="SSF47323">
    <property type="entry name" value="Anticodon-binding domain of a subclass of class I aminoacyl-tRNA synthetases"/>
    <property type="match status" value="1"/>
</dbReference>
<dbReference type="SUPFAM" id="SSF52374">
    <property type="entry name" value="Nucleotidylyl transferase"/>
    <property type="match status" value="1"/>
</dbReference>
<dbReference type="SUPFAM" id="SSF46589">
    <property type="entry name" value="tRNA-binding arm"/>
    <property type="match status" value="1"/>
</dbReference>
<dbReference type="SUPFAM" id="SSF50677">
    <property type="entry name" value="ValRS/IleRS/LeuRS editing domain"/>
    <property type="match status" value="1"/>
</dbReference>
<dbReference type="PROSITE" id="PS00178">
    <property type="entry name" value="AA_TRNA_LIGASE_I"/>
    <property type="match status" value="1"/>
</dbReference>
<accession>Q887M3</accession>
<organism>
    <name type="scientific">Pseudomonas syringae pv. tomato (strain ATCC BAA-871 / DC3000)</name>
    <dbReference type="NCBI Taxonomy" id="223283"/>
    <lineage>
        <taxon>Bacteria</taxon>
        <taxon>Pseudomonadati</taxon>
        <taxon>Pseudomonadota</taxon>
        <taxon>Gammaproteobacteria</taxon>
        <taxon>Pseudomonadales</taxon>
        <taxon>Pseudomonadaceae</taxon>
        <taxon>Pseudomonas</taxon>
    </lineage>
</organism>
<reference key="1">
    <citation type="journal article" date="2003" name="Proc. Natl. Acad. Sci. U.S.A.">
        <title>The complete genome sequence of the Arabidopsis and tomato pathogen Pseudomonas syringae pv. tomato DC3000.</title>
        <authorList>
            <person name="Buell C.R."/>
            <person name="Joardar V."/>
            <person name="Lindeberg M."/>
            <person name="Selengut J."/>
            <person name="Paulsen I.T."/>
            <person name="Gwinn M.L."/>
            <person name="Dodson R.J."/>
            <person name="DeBoy R.T."/>
            <person name="Durkin A.S."/>
            <person name="Kolonay J.F."/>
            <person name="Madupu R."/>
            <person name="Daugherty S.C."/>
            <person name="Brinkac L.M."/>
            <person name="Beanan M.J."/>
            <person name="Haft D.H."/>
            <person name="Nelson W.C."/>
            <person name="Davidsen T.M."/>
            <person name="Zafar N."/>
            <person name="Zhou L."/>
            <person name="Liu J."/>
            <person name="Yuan Q."/>
            <person name="Khouri H.M."/>
            <person name="Fedorova N.B."/>
            <person name="Tran B."/>
            <person name="Russell D."/>
            <person name="Berry K.J."/>
            <person name="Utterback T.R."/>
            <person name="Van Aken S.E."/>
            <person name="Feldblyum T.V."/>
            <person name="D'Ascenzo M."/>
            <person name="Deng W.-L."/>
            <person name="Ramos A.R."/>
            <person name="Alfano J.R."/>
            <person name="Cartinhour S."/>
            <person name="Chatterjee A.K."/>
            <person name="Delaney T.P."/>
            <person name="Lazarowitz S.G."/>
            <person name="Martin G.B."/>
            <person name="Schneider D.J."/>
            <person name="Tang X."/>
            <person name="Bender C.L."/>
            <person name="White O."/>
            <person name="Fraser C.M."/>
            <person name="Collmer A."/>
        </authorList>
    </citation>
    <scope>NUCLEOTIDE SEQUENCE [LARGE SCALE GENOMIC DNA]</scope>
    <source>
        <strain>ATCC BAA-871 / DC3000</strain>
    </source>
</reference>
<name>SYV_PSESM</name>
<protein>
    <recommendedName>
        <fullName evidence="1">Valine--tRNA ligase</fullName>
        <ecNumber evidence="1">6.1.1.9</ecNumber>
    </recommendedName>
    <alternativeName>
        <fullName evidence="1">Valyl-tRNA synthetase</fullName>
        <shortName evidence="1">ValRS</shortName>
    </alternativeName>
</protein>
<keyword id="KW-0030">Aminoacyl-tRNA synthetase</keyword>
<keyword id="KW-0067">ATP-binding</keyword>
<keyword id="KW-0175">Coiled coil</keyword>
<keyword id="KW-0963">Cytoplasm</keyword>
<keyword id="KW-0436">Ligase</keyword>
<keyword id="KW-0547">Nucleotide-binding</keyword>
<keyword id="KW-0648">Protein biosynthesis</keyword>
<keyword id="KW-1185">Reference proteome</keyword>
<sequence length="948" mass="107067">MDKTYQPHAIETSWYQTWESENYFAPQGAGDSYTIMIPPPNVTGSLHMGHGFNNAIMDALIRFRRMQGRNTLWQPGTDHAGIATQMLVERRLEAQGVSRHELGREKFLDKIWEWKAESGGNISRQIRRLGSSVDWSRERFTMDDGLSDAVKEAFVRLHEDGLIYRGKRLVNWDTKLHTAISDLEVENHDEKGHLWNLRYPLADGAKTAEGLDYLIVATTRPETMLGDAAVAVNPQDERYKALIGKFVELPLVGRRIPIIADDYCDPEFGTGCVKITPAHDFNDYEVGKRHNLPLLNIFDKNANVLPAAQVFNLDGKLNESVDGTLPAAYAGLDRFEARKQIVAAFDAAGLLVSIDDHALKVPKGDRSGTIIEPWLTDQWYVSTKPLAEPAIAAVEDGRIAFVPKQYENMYFSWMRDIQDWCISRQLWWGHRIPAWYDESGKVYVGRDEAEVRAKNNLGPEIALQQDNDVLDTWFSSGLWTFSTLGWPEKTKALETFHSTDVLVTGFDIIFFWVARMIMLTLHLVKNEDGTPQVPFKTVYVHGLVRDGQGQKMSKSKGNVLDPLDIVDGIDLETLVEKRTSGLMQPQLAKKIEKQTRQEFADGIASYGTDALRFTFCSLASTGRDIKFDMGRVEGYRNFCNKIWNAARYVLDKGEDCGQNGEAVELSLADRWIISQLQRTEAEVTRQLDQFRFDLAAQALYEFIWNQYCDWYLELSKPVLWDETASIERQRGTRRTLVRVLEVALRLAHPFMPFITEEIWQRLAPLAGVEGKTIMLQPWPVANEARIDQAAEDDIEWLKGLMLAVRNIRGEMNIGPGKPLQLFLKNVSADDQRRLSENDYLLRKLAKLESMTVLTDGAEAPLSATALVGDMEVLVPMAGLIDKGAELARLDKEIQRLQGEVQRVGGKLSNAAFVDKAPPDVIAKERAKLTEAEQALGKLAEQHARIASL</sequence>
<gene>
    <name evidence="1" type="primary">valS</name>
    <name type="ordered locus">PSPTO_1268</name>
</gene>
<proteinExistence type="inferred from homology"/>